<comment type="subunit">
    <text evidence="1">Part of the 30S ribosomal subunit.</text>
</comment>
<comment type="similarity">
    <text evidence="1">Belongs to the universal ribosomal protein uS15 family.</text>
</comment>
<keyword id="KW-1185">Reference proteome</keyword>
<keyword id="KW-0687">Ribonucleoprotein</keyword>
<keyword id="KW-0689">Ribosomal protein</keyword>
<sequence length="152" mass="17495">MNKRRANGSSHSTRPVRTGSPKWVRFSREEVEMLIEELAKKGYTPSMIGIVLRDQYGIPLAKPIIGKKVNQFLKDKGLASQIPEDLFNLIRRAVNVRRHLNEYPGDKTAKKGLEEIESKIRRLSRYYKRVEKLPQDWTYDPAKAELLVSASS</sequence>
<dbReference type="EMBL" id="CP000682">
    <property type="protein sequence ID" value="ABP96385.1"/>
    <property type="molecule type" value="Genomic_DNA"/>
</dbReference>
<dbReference type="RefSeq" id="WP_012022172.1">
    <property type="nucleotide sequence ID" value="NZ_CP139956.1"/>
</dbReference>
<dbReference type="SMR" id="A4YIY3"/>
<dbReference type="STRING" id="399549.Msed_2247"/>
<dbReference type="KEGG" id="mse:Msed_2247"/>
<dbReference type="eggNOG" id="arCOG04185">
    <property type="taxonomic scope" value="Archaea"/>
</dbReference>
<dbReference type="HOGENOM" id="CLU_090139_2_0_2"/>
<dbReference type="Proteomes" id="UP000000242">
    <property type="component" value="Chromosome"/>
</dbReference>
<dbReference type="GO" id="GO:0022627">
    <property type="term" value="C:cytosolic small ribosomal subunit"/>
    <property type="evidence" value="ECO:0007669"/>
    <property type="project" value="TreeGrafter"/>
</dbReference>
<dbReference type="GO" id="GO:0070181">
    <property type="term" value="F:small ribosomal subunit rRNA binding"/>
    <property type="evidence" value="ECO:0007669"/>
    <property type="project" value="TreeGrafter"/>
</dbReference>
<dbReference type="GO" id="GO:0003735">
    <property type="term" value="F:structural constituent of ribosome"/>
    <property type="evidence" value="ECO:0007669"/>
    <property type="project" value="InterPro"/>
</dbReference>
<dbReference type="GO" id="GO:0006412">
    <property type="term" value="P:translation"/>
    <property type="evidence" value="ECO:0007669"/>
    <property type="project" value="UniProtKB-UniRule"/>
</dbReference>
<dbReference type="CDD" id="cd00677">
    <property type="entry name" value="S15_NS1_EPRS_RNA-bind"/>
    <property type="match status" value="1"/>
</dbReference>
<dbReference type="FunFam" id="1.10.287.10:FF:000003">
    <property type="entry name" value="40S ribosomal protein S13"/>
    <property type="match status" value="1"/>
</dbReference>
<dbReference type="Gene3D" id="4.10.860.130">
    <property type="match status" value="1"/>
</dbReference>
<dbReference type="Gene3D" id="1.10.287.10">
    <property type="entry name" value="S15/NS1, RNA-binding"/>
    <property type="match status" value="1"/>
</dbReference>
<dbReference type="HAMAP" id="MF_01343_A">
    <property type="entry name" value="Ribosomal_uS15_A"/>
    <property type="match status" value="1"/>
</dbReference>
<dbReference type="InterPro" id="IPR000589">
    <property type="entry name" value="Ribosomal_uS15"/>
</dbReference>
<dbReference type="InterPro" id="IPR023029">
    <property type="entry name" value="Ribosomal_uS15_arc_euk"/>
</dbReference>
<dbReference type="InterPro" id="IPR012606">
    <property type="entry name" value="Ribosomal_uS15_N"/>
</dbReference>
<dbReference type="InterPro" id="IPR009068">
    <property type="entry name" value="uS15_NS1_RNA-bd_sf"/>
</dbReference>
<dbReference type="NCBIfam" id="NF006331">
    <property type="entry name" value="PRK08561.1"/>
    <property type="match status" value="1"/>
</dbReference>
<dbReference type="PANTHER" id="PTHR11885">
    <property type="entry name" value="RIBOSOMAL PROTEIN S15P/S13E"/>
    <property type="match status" value="1"/>
</dbReference>
<dbReference type="PANTHER" id="PTHR11885:SF6">
    <property type="entry name" value="SMALL RIBOSOMAL SUBUNIT PROTEIN US15"/>
    <property type="match status" value="1"/>
</dbReference>
<dbReference type="Pfam" id="PF08069">
    <property type="entry name" value="Ribosomal_S13_N"/>
    <property type="match status" value="1"/>
</dbReference>
<dbReference type="Pfam" id="PF00312">
    <property type="entry name" value="Ribosomal_S15"/>
    <property type="match status" value="1"/>
</dbReference>
<dbReference type="SMART" id="SM01386">
    <property type="entry name" value="Ribosomal_S13_N"/>
    <property type="match status" value="1"/>
</dbReference>
<dbReference type="SMART" id="SM01387">
    <property type="entry name" value="Ribosomal_S15"/>
    <property type="match status" value="1"/>
</dbReference>
<dbReference type="SUPFAM" id="SSF47060">
    <property type="entry name" value="S15/NS1 RNA-binding domain"/>
    <property type="match status" value="1"/>
</dbReference>
<dbReference type="PROSITE" id="PS00362">
    <property type="entry name" value="RIBOSOMAL_S15"/>
    <property type="match status" value="1"/>
</dbReference>
<organism>
    <name type="scientific">Metallosphaera sedula (strain ATCC 51363 / DSM 5348 / JCM 9185 / NBRC 15509 / TH2)</name>
    <dbReference type="NCBI Taxonomy" id="399549"/>
    <lineage>
        <taxon>Archaea</taxon>
        <taxon>Thermoproteota</taxon>
        <taxon>Thermoprotei</taxon>
        <taxon>Sulfolobales</taxon>
        <taxon>Sulfolobaceae</taxon>
        <taxon>Metallosphaera</taxon>
    </lineage>
</organism>
<accession>A4YIY3</accession>
<evidence type="ECO:0000255" key="1">
    <source>
        <dbReference type="HAMAP-Rule" id="MF_01343"/>
    </source>
</evidence>
<evidence type="ECO:0000256" key="2">
    <source>
        <dbReference type="SAM" id="MobiDB-lite"/>
    </source>
</evidence>
<evidence type="ECO:0000305" key="3"/>
<gene>
    <name evidence="1" type="primary">rps15</name>
    <name type="ordered locus">Msed_2247</name>
</gene>
<reference key="1">
    <citation type="journal article" date="2008" name="Appl. Environ. Microbiol.">
        <title>The genome sequence of the metal-mobilizing, extremely thermoacidophilic archaeon Metallosphaera sedula provides insights into bioleaching-associated metabolism.</title>
        <authorList>
            <person name="Auernik K.S."/>
            <person name="Maezato Y."/>
            <person name="Blum P.H."/>
            <person name="Kelly R.M."/>
        </authorList>
    </citation>
    <scope>NUCLEOTIDE SEQUENCE [LARGE SCALE GENOMIC DNA]</scope>
    <source>
        <strain>ATCC 51363 / DSM 5348 / JCM 9185 / NBRC 15509 / TH2</strain>
    </source>
</reference>
<name>RS15_METS5</name>
<proteinExistence type="inferred from homology"/>
<feature type="chain" id="PRO_0000354225" description="Small ribosomal subunit protein uS15">
    <location>
        <begin position="1"/>
        <end position="152"/>
    </location>
</feature>
<feature type="region of interest" description="Disordered" evidence="2">
    <location>
        <begin position="1"/>
        <end position="20"/>
    </location>
</feature>
<protein>
    <recommendedName>
        <fullName evidence="1">Small ribosomal subunit protein uS15</fullName>
    </recommendedName>
    <alternativeName>
        <fullName evidence="3">30S ribosomal protein S15</fullName>
    </alternativeName>
</protein>